<proteinExistence type="inferred from homology"/>
<dbReference type="EMBL" id="DS231615">
    <property type="protein sequence ID" value="EDU41621.1"/>
    <property type="molecule type" value="Genomic_DNA"/>
</dbReference>
<dbReference type="RefSeq" id="XP_001932516.1">
    <property type="nucleotide sequence ID" value="XM_001932481.1"/>
</dbReference>
<dbReference type="SMR" id="B2VV00"/>
<dbReference type="FunCoup" id="B2VV00">
    <property type="interactions" value="120"/>
</dbReference>
<dbReference type="STRING" id="426418.B2VV00"/>
<dbReference type="EnsemblFungi" id="EDU41621">
    <property type="protein sequence ID" value="EDU41621"/>
    <property type="gene ID" value="PTRG_02183"/>
</dbReference>
<dbReference type="GeneID" id="6339385"/>
<dbReference type="KEGG" id="ptrr:6339385"/>
<dbReference type="eggNOG" id="ENOG502QW7A">
    <property type="taxonomic scope" value="Eukaryota"/>
</dbReference>
<dbReference type="HOGENOM" id="CLU_043316_1_0_1"/>
<dbReference type="InParanoid" id="B2VV00"/>
<dbReference type="OMA" id="NIVWIFY"/>
<dbReference type="OrthoDB" id="13444at28556"/>
<dbReference type="Proteomes" id="UP000001471">
    <property type="component" value="Unassembled WGS sequence"/>
</dbReference>
<dbReference type="GO" id="GO:0005886">
    <property type="term" value="C:plasma membrane"/>
    <property type="evidence" value="ECO:0007669"/>
    <property type="project" value="UniProtKB-SubCell"/>
</dbReference>
<dbReference type="CDD" id="cd11855">
    <property type="entry name" value="SH3_Sho1p"/>
    <property type="match status" value="1"/>
</dbReference>
<dbReference type="FunFam" id="2.30.30.40:FF:000213">
    <property type="entry name" value="High osmolarity signaling protein SHO1"/>
    <property type="match status" value="1"/>
</dbReference>
<dbReference type="Gene3D" id="2.30.30.40">
    <property type="entry name" value="SH3 Domains"/>
    <property type="match status" value="1"/>
</dbReference>
<dbReference type="InterPro" id="IPR036028">
    <property type="entry name" value="SH3-like_dom_sf"/>
</dbReference>
<dbReference type="InterPro" id="IPR001452">
    <property type="entry name" value="SH3_domain"/>
</dbReference>
<dbReference type="InterPro" id="IPR035522">
    <property type="entry name" value="Sho1_SH3"/>
</dbReference>
<dbReference type="Pfam" id="PF00018">
    <property type="entry name" value="SH3_1"/>
    <property type="match status" value="1"/>
</dbReference>
<dbReference type="PRINTS" id="PR00452">
    <property type="entry name" value="SH3DOMAIN"/>
</dbReference>
<dbReference type="SMART" id="SM00326">
    <property type="entry name" value="SH3"/>
    <property type="match status" value="1"/>
</dbReference>
<dbReference type="SUPFAM" id="SSF50044">
    <property type="entry name" value="SH3-domain"/>
    <property type="match status" value="1"/>
</dbReference>
<dbReference type="PROSITE" id="PS50002">
    <property type="entry name" value="SH3"/>
    <property type="match status" value="1"/>
</dbReference>
<sequence length="295" mass="31866">MENGYGQRSQGFSLGRIIGDPFALATISIGILAWIIAFVSSIISAIHGGFPNFAWWTLVFMFFCIAGVTITVASDAERTYHVAIVGFLSAGLVFTTSSVNSLVYSPVAPFEAAAAGYILLSMITIVWVFYYGSQPQASHRTFVDSYALHKEGPGSRSSRPISNGYTNRPETQNASIPPQMYTSAQLNGFETSSPVSGYPGGPAGANGRNSSAPQFGGMGNSQTPTHDEQQQEASIEYPYRAKAIYSYEANPDDANEISFQKHDILEVSDVSGRWWQAKKPNGETGIAPSNYLILL</sequence>
<name>SHO1_PYRTR</name>
<organism>
    <name type="scientific">Pyrenophora tritici-repentis (strain Pt-1C-BFP)</name>
    <name type="common">Wheat tan spot fungus</name>
    <name type="synonym">Drechslera tritici-repentis</name>
    <dbReference type="NCBI Taxonomy" id="426418"/>
    <lineage>
        <taxon>Eukaryota</taxon>
        <taxon>Fungi</taxon>
        <taxon>Dikarya</taxon>
        <taxon>Ascomycota</taxon>
        <taxon>Pezizomycotina</taxon>
        <taxon>Dothideomycetes</taxon>
        <taxon>Pleosporomycetidae</taxon>
        <taxon>Pleosporales</taxon>
        <taxon>Pleosporineae</taxon>
        <taxon>Pleosporaceae</taxon>
        <taxon>Pyrenophora</taxon>
    </lineage>
</organism>
<protein>
    <recommendedName>
        <fullName>High osmolarity signaling protein sho1</fullName>
    </recommendedName>
    <alternativeName>
        <fullName>Osmosensor sho1</fullName>
    </alternativeName>
</protein>
<reference key="1">
    <citation type="journal article" date="2013" name="G3 (Bethesda)">
        <title>Comparative genomics of a plant-pathogenic fungus, Pyrenophora tritici-repentis, reveals transduplication and the impact of repeat elements on pathogenicity and population divergence.</title>
        <authorList>
            <person name="Manning V.A."/>
            <person name="Pandelova I."/>
            <person name="Dhillon B."/>
            <person name="Wilhelm L.J."/>
            <person name="Goodwin S.B."/>
            <person name="Berlin A.M."/>
            <person name="Figueroa M."/>
            <person name="Freitag M."/>
            <person name="Hane J.K."/>
            <person name="Henrissat B."/>
            <person name="Holman W.H."/>
            <person name="Kodira C.D."/>
            <person name="Martin J."/>
            <person name="Oliver R.P."/>
            <person name="Robbertse B."/>
            <person name="Schackwitz W."/>
            <person name="Schwartz D.C."/>
            <person name="Spatafora J.W."/>
            <person name="Turgeon B.G."/>
            <person name="Yandava C."/>
            <person name="Young S."/>
            <person name="Zhou S."/>
            <person name="Zeng Q."/>
            <person name="Grigoriev I.V."/>
            <person name="Ma L.-J."/>
            <person name="Ciuffetti L.M."/>
        </authorList>
    </citation>
    <scope>NUCLEOTIDE SEQUENCE [LARGE SCALE GENOMIC DNA]</scope>
    <source>
        <strain>Pt-1C-BFP</strain>
    </source>
</reference>
<evidence type="ECO:0000250" key="1"/>
<evidence type="ECO:0000255" key="2"/>
<evidence type="ECO:0000255" key="3">
    <source>
        <dbReference type="PROSITE-ProRule" id="PRU00192"/>
    </source>
</evidence>
<evidence type="ECO:0000256" key="4">
    <source>
        <dbReference type="SAM" id="MobiDB-lite"/>
    </source>
</evidence>
<evidence type="ECO:0000305" key="5"/>
<feature type="chain" id="PRO_0000410395" description="High osmolarity signaling protein sho1">
    <location>
        <begin position="1"/>
        <end position="295"/>
    </location>
</feature>
<feature type="topological domain" description="Cytoplasmic" evidence="2">
    <location>
        <begin position="1"/>
        <end position="22"/>
    </location>
</feature>
<feature type="transmembrane region" description="Helical" evidence="2">
    <location>
        <begin position="23"/>
        <end position="43"/>
    </location>
</feature>
<feature type="topological domain" description="Extracellular" evidence="2">
    <location>
        <begin position="44"/>
        <end position="52"/>
    </location>
</feature>
<feature type="transmembrane region" description="Helical" evidence="2">
    <location>
        <begin position="53"/>
        <end position="73"/>
    </location>
</feature>
<feature type="topological domain" description="Cytoplasmic" evidence="2">
    <location>
        <begin position="74"/>
        <end position="81"/>
    </location>
</feature>
<feature type="transmembrane region" description="Helical" evidence="2">
    <location>
        <begin position="82"/>
        <end position="102"/>
    </location>
</feature>
<feature type="topological domain" description="Extracellular" evidence="2">
    <location>
        <begin position="103"/>
        <end position="111"/>
    </location>
</feature>
<feature type="transmembrane region" description="Helical" evidence="2">
    <location>
        <begin position="112"/>
        <end position="132"/>
    </location>
</feature>
<feature type="topological domain" description="Cytoplasmic" evidence="2">
    <location>
        <begin position="133"/>
        <end position="295"/>
    </location>
</feature>
<feature type="domain" description="SH3" evidence="3">
    <location>
        <begin position="236"/>
        <end position="295"/>
    </location>
</feature>
<feature type="region of interest" description="Disordered" evidence="4">
    <location>
        <begin position="150"/>
        <end position="176"/>
    </location>
</feature>
<feature type="region of interest" description="Disordered" evidence="4">
    <location>
        <begin position="191"/>
        <end position="233"/>
    </location>
</feature>
<feature type="compositionally biased region" description="Polar residues" evidence="4">
    <location>
        <begin position="155"/>
        <end position="176"/>
    </location>
</feature>
<comment type="function">
    <text evidence="1">Plasma membrane osmosensor that activates the high osmolarity glycerol (HOG) MAPK signaling pathway in response to high osmolarity.</text>
</comment>
<comment type="subunit">
    <text evidence="1">Forms homooligomers.</text>
</comment>
<comment type="subcellular location">
    <subcellularLocation>
        <location evidence="1">Cell membrane</location>
        <topology evidence="1">Multi-pass membrane protein</topology>
    </subcellularLocation>
</comment>
<comment type="similarity">
    <text evidence="5">Belongs to the SHO1 family.</text>
</comment>
<gene>
    <name type="primary">sho1</name>
    <name type="ORF">PTRG_02183</name>
</gene>
<accession>B2VV00</accession>
<keyword id="KW-1003">Cell membrane</keyword>
<keyword id="KW-0472">Membrane</keyword>
<keyword id="KW-1185">Reference proteome</keyword>
<keyword id="KW-0728">SH3 domain</keyword>
<keyword id="KW-0346">Stress response</keyword>
<keyword id="KW-0812">Transmembrane</keyword>
<keyword id="KW-1133">Transmembrane helix</keyword>